<protein>
    <recommendedName>
        <fullName>Hemoglobin subunit alpha-D</fullName>
    </recommendedName>
    <alternativeName>
        <fullName>Alpha-D-globin</fullName>
    </alternativeName>
    <alternativeName>
        <fullName>Hemoglobin alpha-D chain</fullName>
    </alternativeName>
</protein>
<keyword id="KW-0903">Direct protein sequencing</keyword>
<keyword id="KW-0349">Heme</keyword>
<keyword id="KW-0408">Iron</keyword>
<keyword id="KW-0479">Metal-binding</keyword>
<keyword id="KW-0561">Oxygen transport</keyword>
<keyword id="KW-0813">Transport</keyword>
<organism>
    <name type="scientific">Turdus merula</name>
    <name type="common">Common blackbird</name>
    <dbReference type="NCBI Taxonomy" id="9187"/>
    <lineage>
        <taxon>Eukaryota</taxon>
        <taxon>Metazoa</taxon>
        <taxon>Chordata</taxon>
        <taxon>Craniata</taxon>
        <taxon>Vertebrata</taxon>
        <taxon>Euteleostomi</taxon>
        <taxon>Archelosauria</taxon>
        <taxon>Archosauria</taxon>
        <taxon>Dinosauria</taxon>
        <taxon>Saurischia</taxon>
        <taxon>Theropoda</taxon>
        <taxon>Coelurosauria</taxon>
        <taxon>Aves</taxon>
        <taxon>Neognathae</taxon>
        <taxon>Neoaves</taxon>
        <taxon>Telluraves</taxon>
        <taxon>Australaves</taxon>
        <taxon>Passeriformes</taxon>
        <taxon>Turdidae</taxon>
        <taxon>Turdus</taxon>
    </lineage>
</organism>
<sequence>VLTGEDKKHVQHIWGLLSGAEEDLGAEVLYRMFQSYPPTKTYFPHFDVTQGSEQIRGHGKKFMAALGNAVKNVDNLSQALSELSNLHAYNLRVDPVNFKFLSQCLQVALAARLGKEYSPEVHSAVDKFMAAVAAVLAEKYR</sequence>
<name>HBAD_TURME</name>
<comment type="function">
    <text>Involved in oxygen transport from the lung to the various peripheral tissues.</text>
</comment>
<comment type="subunit">
    <text>Heterotetramer of two alpha-D chains and two beta chains.</text>
</comment>
<comment type="tissue specificity">
    <text>Red blood cells.</text>
</comment>
<comment type="developmental stage">
    <text>In birds, the alpha-D chain occurs in a minor hemoglobin component, called hemoglobin d, which is expressed in late embryonic and adult life.</text>
</comment>
<comment type="similarity">
    <text evidence="1">Belongs to the globin family.</text>
</comment>
<accession>P14523</accession>
<feature type="chain" id="PRO_0000052843" description="Hemoglobin subunit alpha-D">
    <location>
        <begin position="1"/>
        <end position="141"/>
    </location>
</feature>
<feature type="domain" description="Globin" evidence="1">
    <location>
        <begin position="1"/>
        <end position="141"/>
    </location>
</feature>
<feature type="binding site" description="distal binding residue">
    <location>
        <position position="58"/>
    </location>
    <ligand>
        <name>heme b</name>
        <dbReference type="ChEBI" id="CHEBI:60344"/>
    </ligand>
    <ligandPart>
        <name>Fe</name>
        <dbReference type="ChEBI" id="CHEBI:18248"/>
    </ligandPart>
</feature>
<feature type="binding site" description="proximal binding residue">
    <location>
        <position position="87"/>
    </location>
    <ligand>
        <name>heme b</name>
        <dbReference type="ChEBI" id="CHEBI:60344"/>
    </ligand>
    <ligandPart>
        <name>Fe</name>
        <dbReference type="ChEBI" id="CHEBI:18248"/>
    </ligandPart>
</feature>
<proteinExistence type="evidence at protein level"/>
<dbReference type="PIR" id="S04002">
    <property type="entry name" value="HAHTDB"/>
</dbReference>
<dbReference type="SMR" id="P14523"/>
<dbReference type="GO" id="GO:0072562">
    <property type="term" value="C:blood microparticle"/>
    <property type="evidence" value="ECO:0007669"/>
    <property type="project" value="TreeGrafter"/>
</dbReference>
<dbReference type="GO" id="GO:0031838">
    <property type="term" value="C:haptoglobin-hemoglobin complex"/>
    <property type="evidence" value="ECO:0007669"/>
    <property type="project" value="TreeGrafter"/>
</dbReference>
<dbReference type="GO" id="GO:0005833">
    <property type="term" value="C:hemoglobin complex"/>
    <property type="evidence" value="ECO:0007669"/>
    <property type="project" value="InterPro"/>
</dbReference>
<dbReference type="GO" id="GO:0031720">
    <property type="term" value="F:haptoglobin binding"/>
    <property type="evidence" value="ECO:0007669"/>
    <property type="project" value="TreeGrafter"/>
</dbReference>
<dbReference type="GO" id="GO:0020037">
    <property type="term" value="F:heme binding"/>
    <property type="evidence" value="ECO:0007669"/>
    <property type="project" value="InterPro"/>
</dbReference>
<dbReference type="GO" id="GO:0005506">
    <property type="term" value="F:iron ion binding"/>
    <property type="evidence" value="ECO:0007669"/>
    <property type="project" value="InterPro"/>
</dbReference>
<dbReference type="GO" id="GO:0043177">
    <property type="term" value="F:organic acid binding"/>
    <property type="evidence" value="ECO:0007669"/>
    <property type="project" value="TreeGrafter"/>
</dbReference>
<dbReference type="GO" id="GO:0019825">
    <property type="term" value="F:oxygen binding"/>
    <property type="evidence" value="ECO:0007669"/>
    <property type="project" value="InterPro"/>
</dbReference>
<dbReference type="GO" id="GO:0005344">
    <property type="term" value="F:oxygen carrier activity"/>
    <property type="evidence" value="ECO:0007669"/>
    <property type="project" value="UniProtKB-KW"/>
</dbReference>
<dbReference type="GO" id="GO:0004601">
    <property type="term" value="F:peroxidase activity"/>
    <property type="evidence" value="ECO:0007669"/>
    <property type="project" value="TreeGrafter"/>
</dbReference>
<dbReference type="GO" id="GO:0042744">
    <property type="term" value="P:hydrogen peroxide catabolic process"/>
    <property type="evidence" value="ECO:0007669"/>
    <property type="project" value="TreeGrafter"/>
</dbReference>
<dbReference type="CDD" id="cd08927">
    <property type="entry name" value="Hb-alpha-like"/>
    <property type="match status" value="1"/>
</dbReference>
<dbReference type="FunFam" id="1.10.490.10:FF:000002">
    <property type="entry name" value="Hemoglobin subunit alpha"/>
    <property type="match status" value="1"/>
</dbReference>
<dbReference type="Gene3D" id="1.10.490.10">
    <property type="entry name" value="Globins"/>
    <property type="match status" value="1"/>
</dbReference>
<dbReference type="InterPro" id="IPR000971">
    <property type="entry name" value="Globin"/>
</dbReference>
<dbReference type="InterPro" id="IPR009050">
    <property type="entry name" value="Globin-like_sf"/>
</dbReference>
<dbReference type="InterPro" id="IPR012292">
    <property type="entry name" value="Globin/Proto"/>
</dbReference>
<dbReference type="InterPro" id="IPR002338">
    <property type="entry name" value="Hemoglobin_a-typ"/>
</dbReference>
<dbReference type="InterPro" id="IPR050056">
    <property type="entry name" value="Hemoglobin_oxygen_transport"/>
</dbReference>
<dbReference type="InterPro" id="IPR002339">
    <property type="entry name" value="Hemoglobin_pi"/>
</dbReference>
<dbReference type="PANTHER" id="PTHR11442">
    <property type="entry name" value="HEMOGLOBIN FAMILY MEMBER"/>
    <property type="match status" value="1"/>
</dbReference>
<dbReference type="PANTHER" id="PTHR11442:SF41">
    <property type="entry name" value="HEMOGLOBIN SUBUNIT ZETA"/>
    <property type="match status" value="1"/>
</dbReference>
<dbReference type="Pfam" id="PF00042">
    <property type="entry name" value="Globin"/>
    <property type="match status" value="1"/>
</dbReference>
<dbReference type="PRINTS" id="PR00612">
    <property type="entry name" value="ALPHAHAEM"/>
</dbReference>
<dbReference type="PRINTS" id="PR00815">
    <property type="entry name" value="PIHAEM"/>
</dbReference>
<dbReference type="SUPFAM" id="SSF46458">
    <property type="entry name" value="Globin-like"/>
    <property type="match status" value="1"/>
</dbReference>
<dbReference type="PROSITE" id="PS01033">
    <property type="entry name" value="GLOBIN"/>
    <property type="match status" value="1"/>
</dbReference>
<gene>
    <name type="primary">HBAD</name>
</gene>
<evidence type="ECO:0000255" key="1">
    <source>
        <dbReference type="PROSITE-ProRule" id="PRU00238"/>
    </source>
</evidence>
<reference key="1">
    <citation type="journal article" date="1989" name="Biol. Chem. Hoppe-Seyler">
        <title>The hemoglobins of the adult blackbird (Turdus merula, Passeriformes). The sequence of the major (HbA) and minor component (HbD).</title>
        <authorList>
            <person name="Nothum R."/>
            <person name="Braunitzer G."/>
            <person name="Hiebl I."/>
            <person name="Kosters J."/>
            <person name="Schneeganss D."/>
        </authorList>
    </citation>
    <scope>PROTEIN SEQUENCE</scope>
</reference>